<accession>Q49YY5</accession>
<protein>
    <recommendedName>
        <fullName evidence="1">Chaperonin GroEL</fullName>
        <ecNumber evidence="1">5.6.1.7</ecNumber>
    </recommendedName>
    <alternativeName>
        <fullName evidence="1">60 kDa chaperonin</fullName>
    </alternativeName>
    <alternativeName>
        <fullName evidence="1">Chaperonin-60</fullName>
        <shortName evidence="1">Cpn60</shortName>
    </alternativeName>
</protein>
<name>CH60_STAS1</name>
<organism>
    <name type="scientific">Staphylococcus saprophyticus subsp. saprophyticus (strain ATCC 15305 / DSM 20229 / NCIMB 8711 / NCTC 7292 / S-41)</name>
    <dbReference type="NCBI Taxonomy" id="342451"/>
    <lineage>
        <taxon>Bacteria</taxon>
        <taxon>Bacillati</taxon>
        <taxon>Bacillota</taxon>
        <taxon>Bacilli</taxon>
        <taxon>Bacillales</taxon>
        <taxon>Staphylococcaceae</taxon>
        <taxon>Staphylococcus</taxon>
    </lineage>
</organism>
<evidence type="ECO:0000255" key="1">
    <source>
        <dbReference type="HAMAP-Rule" id="MF_00600"/>
    </source>
</evidence>
<keyword id="KW-0067">ATP-binding</keyword>
<keyword id="KW-0143">Chaperone</keyword>
<keyword id="KW-0963">Cytoplasm</keyword>
<keyword id="KW-0413">Isomerase</keyword>
<keyword id="KW-0547">Nucleotide-binding</keyword>
<keyword id="KW-1185">Reference proteome</keyword>
<feature type="chain" id="PRO_0000256995" description="Chaperonin GroEL">
    <location>
        <begin position="1"/>
        <end position="540"/>
    </location>
</feature>
<feature type="binding site" evidence="1">
    <location>
        <begin position="29"/>
        <end position="32"/>
    </location>
    <ligand>
        <name>ATP</name>
        <dbReference type="ChEBI" id="CHEBI:30616"/>
    </ligand>
</feature>
<feature type="binding site" evidence="1">
    <location>
        <begin position="86"/>
        <end position="90"/>
    </location>
    <ligand>
        <name>ATP</name>
        <dbReference type="ChEBI" id="CHEBI:30616"/>
    </ligand>
</feature>
<feature type="binding site" evidence="1">
    <location>
        <position position="413"/>
    </location>
    <ligand>
        <name>ATP</name>
        <dbReference type="ChEBI" id="CHEBI:30616"/>
    </ligand>
</feature>
<feature type="binding site" evidence="1">
    <location>
        <begin position="476"/>
        <end position="478"/>
    </location>
    <ligand>
        <name>ATP</name>
        <dbReference type="ChEBI" id="CHEBI:30616"/>
    </ligand>
</feature>
<feature type="binding site" evidence="1">
    <location>
        <position position="492"/>
    </location>
    <ligand>
        <name>ATP</name>
        <dbReference type="ChEBI" id="CHEBI:30616"/>
    </ligand>
</feature>
<sequence>MAKDLKFSEDARQSMLRGVDKLANAVKVTIGPKGRNVVLDKEYTSPLITNDGVTIAKEIELEDPYENMGAKLVQEVANKTNEIAGDGTTTATVLAQAMIQEGLKNVTSGANPVGLRQGIDKAVEVAIEALHEISQNVDNKNEIAQVGSISAADEEIGKYISEAMEKVGNDGVITIEESSGFNTELEVVEGMQFDRGYQSPYMVTDSDKMVADLERPYILITDKKISSFQDILPLLEQVVQSNRPILIVADDVEGDALTNIVLNRMRGTFTAVAVKAPGFGDRRKAMLEDLAILTGAQVITDDLGLELKEATMDMLGTANKAEITKDNTTVVDGDGDQNSIDARVSQIKAQIEETDSEFDKEKLQERLAKLAGGVAVIKVGAASETELKERKLRIEDALNSTRAAVEEGIVAGGGTAFMNIYEKVAKIEAEGDIATGINIVLKALEAPVRQIAENAGLEGSIIVERLKNADIGVGFNAATNEWVNMLEAGIVDPTKVTRSSLQHAASVAAMFLTTEAVVANIPEESNNDAQAGMGGMPGMM</sequence>
<dbReference type="EC" id="5.6.1.7" evidence="1"/>
<dbReference type="EMBL" id="AP008934">
    <property type="protein sequence ID" value="BAE17993.1"/>
    <property type="molecule type" value="Genomic_DNA"/>
</dbReference>
<dbReference type="RefSeq" id="WP_011302732.1">
    <property type="nucleotide sequence ID" value="NZ_MTGA01000031.1"/>
</dbReference>
<dbReference type="SMR" id="Q49YY5"/>
<dbReference type="GeneID" id="3617370"/>
<dbReference type="KEGG" id="ssp:SSP0848"/>
<dbReference type="PATRIC" id="fig|342451.11.peg.850"/>
<dbReference type="eggNOG" id="COG0459">
    <property type="taxonomic scope" value="Bacteria"/>
</dbReference>
<dbReference type="HOGENOM" id="CLU_016503_3_0_9"/>
<dbReference type="OrthoDB" id="9766614at2"/>
<dbReference type="Proteomes" id="UP000006371">
    <property type="component" value="Chromosome"/>
</dbReference>
<dbReference type="GO" id="GO:0005737">
    <property type="term" value="C:cytoplasm"/>
    <property type="evidence" value="ECO:0007669"/>
    <property type="project" value="UniProtKB-SubCell"/>
</dbReference>
<dbReference type="GO" id="GO:0005524">
    <property type="term" value="F:ATP binding"/>
    <property type="evidence" value="ECO:0007669"/>
    <property type="project" value="UniProtKB-UniRule"/>
</dbReference>
<dbReference type="GO" id="GO:0140662">
    <property type="term" value="F:ATP-dependent protein folding chaperone"/>
    <property type="evidence" value="ECO:0007669"/>
    <property type="project" value="InterPro"/>
</dbReference>
<dbReference type="GO" id="GO:0016853">
    <property type="term" value="F:isomerase activity"/>
    <property type="evidence" value="ECO:0007669"/>
    <property type="project" value="UniProtKB-KW"/>
</dbReference>
<dbReference type="GO" id="GO:0051082">
    <property type="term" value="F:unfolded protein binding"/>
    <property type="evidence" value="ECO:0007669"/>
    <property type="project" value="UniProtKB-UniRule"/>
</dbReference>
<dbReference type="GO" id="GO:0042026">
    <property type="term" value="P:protein refolding"/>
    <property type="evidence" value="ECO:0007669"/>
    <property type="project" value="UniProtKB-UniRule"/>
</dbReference>
<dbReference type="CDD" id="cd03344">
    <property type="entry name" value="GroEL"/>
    <property type="match status" value="1"/>
</dbReference>
<dbReference type="FunFam" id="1.10.560.10:FF:000001">
    <property type="entry name" value="60 kDa chaperonin"/>
    <property type="match status" value="1"/>
</dbReference>
<dbReference type="FunFam" id="3.50.7.10:FF:000001">
    <property type="entry name" value="60 kDa chaperonin"/>
    <property type="match status" value="1"/>
</dbReference>
<dbReference type="Gene3D" id="3.50.7.10">
    <property type="entry name" value="GroEL"/>
    <property type="match status" value="1"/>
</dbReference>
<dbReference type="Gene3D" id="1.10.560.10">
    <property type="entry name" value="GroEL-like equatorial domain"/>
    <property type="match status" value="1"/>
</dbReference>
<dbReference type="Gene3D" id="3.30.260.10">
    <property type="entry name" value="TCP-1-like chaperonin intermediate domain"/>
    <property type="match status" value="1"/>
</dbReference>
<dbReference type="HAMAP" id="MF_00600">
    <property type="entry name" value="CH60"/>
    <property type="match status" value="1"/>
</dbReference>
<dbReference type="InterPro" id="IPR018370">
    <property type="entry name" value="Chaperonin_Cpn60_CS"/>
</dbReference>
<dbReference type="InterPro" id="IPR001844">
    <property type="entry name" value="Cpn60/GroEL"/>
</dbReference>
<dbReference type="InterPro" id="IPR002423">
    <property type="entry name" value="Cpn60/GroEL/TCP-1"/>
</dbReference>
<dbReference type="InterPro" id="IPR027409">
    <property type="entry name" value="GroEL-like_apical_dom_sf"/>
</dbReference>
<dbReference type="InterPro" id="IPR027413">
    <property type="entry name" value="GROEL-like_equatorial_sf"/>
</dbReference>
<dbReference type="InterPro" id="IPR027410">
    <property type="entry name" value="TCP-1-like_intermed_sf"/>
</dbReference>
<dbReference type="NCBIfam" id="TIGR02348">
    <property type="entry name" value="GroEL"/>
    <property type="match status" value="1"/>
</dbReference>
<dbReference type="NCBIfam" id="NF000592">
    <property type="entry name" value="PRK00013.1"/>
    <property type="match status" value="1"/>
</dbReference>
<dbReference type="NCBIfam" id="NF009487">
    <property type="entry name" value="PRK12849.1"/>
    <property type="match status" value="1"/>
</dbReference>
<dbReference type="NCBIfam" id="NF009488">
    <property type="entry name" value="PRK12850.1"/>
    <property type="match status" value="1"/>
</dbReference>
<dbReference type="NCBIfam" id="NF009489">
    <property type="entry name" value="PRK12851.1"/>
    <property type="match status" value="1"/>
</dbReference>
<dbReference type="PANTHER" id="PTHR45633">
    <property type="entry name" value="60 KDA HEAT SHOCK PROTEIN, MITOCHONDRIAL"/>
    <property type="match status" value="1"/>
</dbReference>
<dbReference type="Pfam" id="PF00118">
    <property type="entry name" value="Cpn60_TCP1"/>
    <property type="match status" value="1"/>
</dbReference>
<dbReference type="PRINTS" id="PR00298">
    <property type="entry name" value="CHAPERONIN60"/>
</dbReference>
<dbReference type="SUPFAM" id="SSF52029">
    <property type="entry name" value="GroEL apical domain-like"/>
    <property type="match status" value="1"/>
</dbReference>
<dbReference type="SUPFAM" id="SSF48592">
    <property type="entry name" value="GroEL equatorial domain-like"/>
    <property type="match status" value="1"/>
</dbReference>
<dbReference type="SUPFAM" id="SSF54849">
    <property type="entry name" value="GroEL-intermediate domain like"/>
    <property type="match status" value="1"/>
</dbReference>
<dbReference type="PROSITE" id="PS00296">
    <property type="entry name" value="CHAPERONINS_CPN60"/>
    <property type="match status" value="1"/>
</dbReference>
<comment type="function">
    <text evidence="1">Together with its co-chaperonin GroES, plays an essential role in assisting protein folding. The GroEL-GroES system forms a nano-cage that allows encapsulation of the non-native substrate proteins and provides a physical environment optimized to promote and accelerate protein folding.</text>
</comment>
<comment type="catalytic activity">
    <reaction evidence="1">
        <text>ATP + H2O + a folded polypeptide = ADP + phosphate + an unfolded polypeptide.</text>
        <dbReference type="EC" id="5.6.1.7"/>
    </reaction>
</comment>
<comment type="subunit">
    <text evidence="1">Forms a cylinder of 14 subunits composed of two heptameric rings stacked back-to-back. Interacts with the co-chaperonin GroES.</text>
</comment>
<comment type="subcellular location">
    <subcellularLocation>
        <location evidence="1">Cytoplasm</location>
    </subcellularLocation>
</comment>
<comment type="similarity">
    <text evidence="1">Belongs to the chaperonin (HSP60) family.</text>
</comment>
<proteinExistence type="inferred from homology"/>
<reference key="1">
    <citation type="journal article" date="2005" name="Proc. Natl. Acad. Sci. U.S.A.">
        <title>Whole genome sequence of Staphylococcus saprophyticus reveals the pathogenesis of uncomplicated urinary tract infection.</title>
        <authorList>
            <person name="Kuroda M."/>
            <person name="Yamashita A."/>
            <person name="Hirakawa H."/>
            <person name="Kumano M."/>
            <person name="Morikawa K."/>
            <person name="Higashide M."/>
            <person name="Maruyama A."/>
            <person name="Inose Y."/>
            <person name="Matoba K."/>
            <person name="Toh H."/>
            <person name="Kuhara S."/>
            <person name="Hattori M."/>
            <person name="Ohta T."/>
        </authorList>
    </citation>
    <scope>NUCLEOTIDE SEQUENCE [LARGE SCALE GENOMIC DNA]</scope>
    <source>
        <strain>ATCC 15305 / DSM 20229 / NCIMB 8711 / NCTC 7292 / S-41</strain>
    </source>
</reference>
<gene>
    <name evidence="1" type="primary">groEL</name>
    <name evidence="1" type="synonym">groL</name>
    <name type="ordered locus">SSP0848</name>
</gene>